<dbReference type="EC" id="2.1.1.-" evidence="1"/>
<dbReference type="EMBL" id="AJ248284">
    <property type="protein sequence ID" value="CAB49301.1"/>
    <property type="molecule type" value="Genomic_DNA"/>
</dbReference>
<dbReference type="EMBL" id="HE613800">
    <property type="protein sequence ID" value="CCE69756.1"/>
    <property type="molecule type" value="Genomic_DNA"/>
</dbReference>
<dbReference type="PIR" id="F75152">
    <property type="entry name" value="F75152"/>
</dbReference>
<dbReference type="RefSeq" id="WP_010867501.1">
    <property type="nucleotide sequence ID" value="NC_000868.1"/>
</dbReference>
<dbReference type="SMR" id="Q9V1P8"/>
<dbReference type="STRING" id="272844.PAB0253"/>
<dbReference type="KEGG" id="pab:PAB0253"/>
<dbReference type="PATRIC" id="fig|272844.11.peg.399"/>
<dbReference type="eggNOG" id="arCOG04131">
    <property type="taxonomic scope" value="Archaea"/>
</dbReference>
<dbReference type="HOGENOM" id="CLU_041220_0_2_2"/>
<dbReference type="OrthoDB" id="9883at2157"/>
<dbReference type="PhylomeDB" id="Q9V1P8"/>
<dbReference type="Proteomes" id="UP000000810">
    <property type="component" value="Chromosome"/>
</dbReference>
<dbReference type="Proteomes" id="UP000009139">
    <property type="component" value="Chromosome"/>
</dbReference>
<dbReference type="GO" id="GO:0005737">
    <property type="term" value="C:cytoplasm"/>
    <property type="evidence" value="ECO:0007669"/>
    <property type="project" value="UniProtKB-SubCell"/>
</dbReference>
<dbReference type="GO" id="GO:0003723">
    <property type="term" value="F:RNA binding"/>
    <property type="evidence" value="ECO:0007669"/>
    <property type="project" value="UniProtKB-KW"/>
</dbReference>
<dbReference type="GO" id="GO:0000179">
    <property type="term" value="F:rRNA (adenine-N6,N6-)-dimethyltransferase activity"/>
    <property type="evidence" value="ECO:0007669"/>
    <property type="project" value="InterPro"/>
</dbReference>
<dbReference type="CDD" id="cd02440">
    <property type="entry name" value="AdoMet_MTases"/>
    <property type="match status" value="1"/>
</dbReference>
<dbReference type="Gene3D" id="1.10.8.100">
    <property type="entry name" value="Ribosomal RNA adenine dimethylase-like, domain 2"/>
    <property type="match status" value="1"/>
</dbReference>
<dbReference type="Gene3D" id="3.40.50.150">
    <property type="entry name" value="Vaccinia Virus protein VP39"/>
    <property type="match status" value="1"/>
</dbReference>
<dbReference type="HAMAP" id="MF_00607">
    <property type="entry name" value="16SrRNA_methyltr_A"/>
    <property type="match status" value="1"/>
</dbReference>
<dbReference type="InterPro" id="IPR001737">
    <property type="entry name" value="KsgA/Erm"/>
</dbReference>
<dbReference type="InterPro" id="IPR023165">
    <property type="entry name" value="rRNA_Ade_diMease-like_C"/>
</dbReference>
<dbReference type="InterPro" id="IPR020596">
    <property type="entry name" value="rRNA_Ade_Mease_Trfase_CS"/>
</dbReference>
<dbReference type="InterPro" id="IPR020598">
    <property type="entry name" value="rRNA_Ade_methylase_Trfase_N"/>
</dbReference>
<dbReference type="InterPro" id="IPR011530">
    <property type="entry name" value="rRNA_adenine_dimethylase"/>
</dbReference>
<dbReference type="InterPro" id="IPR029063">
    <property type="entry name" value="SAM-dependent_MTases_sf"/>
</dbReference>
<dbReference type="NCBIfam" id="TIGR00755">
    <property type="entry name" value="ksgA"/>
    <property type="match status" value="1"/>
</dbReference>
<dbReference type="PANTHER" id="PTHR11727">
    <property type="entry name" value="DIMETHYLADENOSINE TRANSFERASE"/>
    <property type="match status" value="1"/>
</dbReference>
<dbReference type="PANTHER" id="PTHR11727:SF7">
    <property type="entry name" value="DIMETHYLADENOSINE TRANSFERASE-RELATED"/>
    <property type="match status" value="1"/>
</dbReference>
<dbReference type="Pfam" id="PF00398">
    <property type="entry name" value="RrnaAD"/>
    <property type="match status" value="1"/>
</dbReference>
<dbReference type="SMART" id="SM00650">
    <property type="entry name" value="rADc"/>
    <property type="match status" value="1"/>
</dbReference>
<dbReference type="SUPFAM" id="SSF53335">
    <property type="entry name" value="S-adenosyl-L-methionine-dependent methyltransferases"/>
    <property type="match status" value="1"/>
</dbReference>
<dbReference type="PROSITE" id="PS01131">
    <property type="entry name" value="RRNA_A_DIMETH"/>
    <property type="match status" value="1"/>
</dbReference>
<dbReference type="PROSITE" id="PS51689">
    <property type="entry name" value="SAM_RNA_A_N6_MT"/>
    <property type="match status" value="1"/>
</dbReference>
<comment type="function">
    <text evidence="1">Specifically dimethylates two adjacent adenosines in the loop of a conserved hairpin near the 3'-end of 16S rRNA in the 30S particle. May play a critical role in biogenesis of 30S subunits.</text>
</comment>
<comment type="subcellular location">
    <subcellularLocation>
        <location evidence="1">Cytoplasm</location>
    </subcellularLocation>
</comment>
<comment type="similarity">
    <text evidence="1">Belongs to the class I-like SAM-binding methyltransferase superfamily. rRNA adenine N(6)-methyltransferase family. RsmA subfamily.</text>
</comment>
<name>RSMA_PYRAB</name>
<sequence length="269" mass="31081">MRDRLFFLLSKYGIRPNDRIGQHFLIVKDVIDKAIEVAEVSKSDVVLEVGPGLGFLTDELSKRAKKVFTIELDRRIIEILRNEYSWNNVEIIQGDAVKVEWPSFNKVVSNIPYQISSPFTFKLLKMEFERAVVMYQLEFALRMTAKPGDRNYSRLSLMTQALADVEIVMRIGKGAFYPKPKVDSALVLITPKKDRIELNESLVKALFQHRRKVVSKALRESAHMLGIKDVKTVKDILSSVPHSNKRVFHLTPEEVKEIEEYLREHRIIS</sequence>
<reference key="1">
    <citation type="journal article" date="2003" name="Mol. Microbiol.">
        <title>An integrated analysis of the genome of the hyperthermophilic archaeon Pyrococcus abyssi.</title>
        <authorList>
            <person name="Cohen G.N."/>
            <person name="Barbe V."/>
            <person name="Flament D."/>
            <person name="Galperin M."/>
            <person name="Heilig R."/>
            <person name="Lecompte O."/>
            <person name="Poch O."/>
            <person name="Prieur D."/>
            <person name="Querellou J."/>
            <person name="Ripp R."/>
            <person name="Thierry J.-C."/>
            <person name="Van der Oost J."/>
            <person name="Weissenbach J."/>
            <person name="Zivanovic Y."/>
            <person name="Forterre P."/>
        </authorList>
    </citation>
    <scope>NUCLEOTIDE SEQUENCE [LARGE SCALE GENOMIC DNA]</scope>
    <source>
        <strain>GE5 / Orsay</strain>
    </source>
</reference>
<reference key="2">
    <citation type="journal article" date="2012" name="Curr. Microbiol.">
        <title>Re-annotation of two hyperthermophilic archaea Pyrococcus abyssi GE5 and Pyrococcus furiosus DSM 3638.</title>
        <authorList>
            <person name="Gao J."/>
            <person name="Wang J."/>
        </authorList>
    </citation>
    <scope>GENOME REANNOTATION</scope>
    <source>
        <strain>GE5 / Orsay</strain>
    </source>
</reference>
<accession>Q9V1P8</accession>
<accession>G8ZI13</accession>
<keyword id="KW-0963">Cytoplasm</keyword>
<keyword id="KW-0489">Methyltransferase</keyword>
<keyword id="KW-0694">RNA-binding</keyword>
<keyword id="KW-0698">rRNA processing</keyword>
<keyword id="KW-0949">S-adenosyl-L-methionine</keyword>
<keyword id="KW-0808">Transferase</keyword>
<evidence type="ECO:0000255" key="1">
    <source>
        <dbReference type="HAMAP-Rule" id="MF_00607"/>
    </source>
</evidence>
<organism>
    <name type="scientific">Pyrococcus abyssi (strain GE5 / Orsay)</name>
    <dbReference type="NCBI Taxonomy" id="272844"/>
    <lineage>
        <taxon>Archaea</taxon>
        <taxon>Methanobacteriati</taxon>
        <taxon>Methanobacteriota</taxon>
        <taxon>Thermococci</taxon>
        <taxon>Thermococcales</taxon>
        <taxon>Thermococcaceae</taxon>
        <taxon>Pyrococcus</taxon>
    </lineage>
</organism>
<protein>
    <recommendedName>
        <fullName evidence="1">Probable ribosomal RNA small subunit methyltransferase A</fullName>
        <ecNumber evidence="1">2.1.1.-</ecNumber>
    </recommendedName>
    <alternativeName>
        <fullName evidence="1">16S rRNA dimethyladenosine transferase</fullName>
    </alternativeName>
    <alternativeName>
        <fullName evidence="1">16S rRNA dimethylase</fullName>
    </alternativeName>
    <alternativeName>
        <fullName evidence="1">S-adenosylmethionine-6-N',N'-adenosyl(rRNA) dimethyltransferase</fullName>
    </alternativeName>
</protein>
<proteinExistence type="inferred from homology"/>
<gene>
    <name evidence="1" type="primary">rsmA</name>
    <name evidence="1" type="synonym">ksgA</name>
    <name type="ordered locus">PYRAB03790</name>
    <name type="ORF">PAB0253</name>
</gene>
<feature type="chain" id="PRO_0000101661" description="Probable ribosomal RNA small subunit methyltransferase A">
    <location>
        <begin position="1"/>
        <end position="269"/>
    </location>
</feature>
<feature type="binding site" evidence="1">
    <location>
        <position position="23"/>
    </location>
    <ligand>
        <name>S-adenosyl-L-methionine</name>
        <dbReference type="ChEBI" id="CHEBI:59789"/>
    </ligand>
</feature>
<feature type="binding site" evidence="1">
    <location>
        <position position="25"/>
    </location>
    <ligand>
        <name>S-adenosyl-L-methionine</name>
        <dbReference type="ChEBI" id="CHEBI:59789"/>
    </ligand>
</feature>
<feature type="binding site" evidence="1">
    <location>
        <position position="50"/>
    </location>
    <ligand>
        <name>S-adenosyl-L-methionine</name>
        <dbReference type="ChEBI" id="CHEBI:59789"/>
    </ligand>
</feature>
<feature type="binding site" evidence="1">
    <location>
        <position position="71"/>
    </location>
    <ligand>
        <name>S-adenosyl-L-methionine</name>
        <dbReference type="ChEBI" id="CHEBI:59789"/>
    </ligand>
</feature>
<feature type="binding site" evidence="1">
    <location>
        <position position="95"/>
    </location>
    <ligand>
        <name>S-adenosyl-L-methionine</name>
        <dbReference type="ChEBI" id="CHEBI:59789"/>
    </ligand>
</feature>
<feature type="binding site" evidence="1">
    <location>
        <position position="110"/>
    </location>
    <ligand>
        <name>S-adenosyl-L-methionine</name>
        <dbReference type="ChEBI" id="CHEBI:59789"/>
    </ligand>
</feature>